<proteinExistence type="inferred from homology"/>
<dbReference type="EMBL" id="CP000903">
    <property type="protein sequence ID" value="ABY41361.1"/>
    <property type="molecule type" value="Genomic_DNA"/>
</dbReference>
<dbReference type="RefSeq" id="WP_001085872.1">
    <property type="nucleotide sequence ID" value="NC_010184.1"/>
</dbReference>
<dbReference type="SMR" id="A9VNB0"/>
<dbReference type="GeneID" id="93010956"/>
<dbReference type="KEGG" id="bwe:BcerKBAB4_0092"/>
<dbReference type="eggNOG" id="COG0080">
    <property type="taxonomic scope" value="Bacteria"/>
</dbReference>
<dbReference type="HOGENOM" id="CLU_074237_2_1_9"/>
<dbReference type="Proteomes" id="UP000002154">
    <property type="component" value="Chromosome"/>
</dbReference>
<dbReference type="GO" id="GO:0022625">
    <property type="term" value="C:cytosolic large ribosomal subunit"/>
    <property type="evidence" value="ECO:0007669"/>
    <property type="project" value="TreeGrafter"/>
</dbReference>
<dbReference type="GO" id="GO:0070180">
    <property type="term" value="F:large ribosomal subunit rRNA binding"/>
    <property type="evidence" value="ECO:0007669"/>
    <property type="project" value="UniProtKB-UniRule"/>
</dbReference>
<dbReference type="GO" id="GO:0003735">
    <property type="term" value="F:structural constituent of ribosome"/>
    <property type="evidence" value="ECO:0007669"/>
    <property type="project" value="InterPro"/>
</dbReference>
<dbReference type="GO" id="GO:0006412">
    <property type="term" value="P:translation"/>
    <property type="evidence" value="ECO:0007669"/>
    <property type="project" value="UniProtKB-UniRule"/>
</dbReference>
<dbReference type="CDD" id="cd00349">
    <property type="entry name" value="Ribosomal_L11"/>
    <property type="match status" value="1"/>
</dbReference>
<dbReference type="FunFam" id="1.10.10.250:FF:000001">
    <property type="entry name" value="50S ribosomal protein L11"/>
    <property type="match status" value="1"/>
</dbReference>
<dbReference type="FunFam" id="3.30.1550.10:FF:000001">
    <property type="entry name" value="50S ribosomal protein L11"/>
    <property type="match status" value="1"/>
</dbReference>
<dbReference type="Gene3D" id="1.10.10.250">
    <property type="entry name" value="Ribosomal protein L11, C-terminal domain"/>
    <property type="match status" value="1"/>
</dbReference>
<dbReference type="Gene3D" id="3.30.1550.10">
    <property type="entry name" value="Ribosomal protein L11/L12, N-terminal domain"/>
    <property type="match status" value="1"/>
</dbReference>
<dbReference type="HAMAP" id="MF_00736">
    <property type="entry name" value="Ribosomal_uL11"/>
    <property type="match status" value="1"/>
</dbReference>
<dbReference type="InterPro" id="IPR000911">
    <property type="entry name" value="Ribosomal_uL11"/>
</dbReference>
<dbReference type="InterPro" id="IPR006519">
    <property type="entry name" value="Ribosomal_uL11_bac-typ"/>
</dbReference>
<dbReference type="InterPro" id="IPR020783">
    <property type="entry name" value="Ribosomal_uL11_C"/>
</dbReference>
<dbReference type="InterPro" id="IPR036769">
    <property type="entry name" value="Ribosomal_uL11_C_sf"/>
</dbReference>
<dbReference type="InterPro" id="IPR020785">
    <property type="entry name" value="Ribosomal_uL11_CS"/>
</dbReference>
<dbReference type="InterPro" id="IPR020784">
    <property type="entry name" value="Ribosomal_uL11_N"/>
</dbReference>
<dbReference type="InterPro" id="IPR036796">
    <property type="entry name" value="Ribosomal_uL11_N_sf"/>
</dbReference>
<dbReference type="NCBIfam" id="TIGR01632">
    <property type="entry name" value="L11_bact"/>
    <property type="match status" value="1"/>
</dbReference>
<dbReference type="PANTHER" id="PTHR11661">
    <property type="entry name" value="60S RIBOSOMAL PROTEIN L12"/>
    <property type="match status" value="1"/>
</dbReference>
<dbReference type="PANTHER" id="PTHR11661:SF1">
    <property type="entry name" value="LARGE RIBOSOMAL SUBUNIT PROTEIN UL11M"/>
    <property type="match status" value="1"/>
</dbReference>
<dbReference type="Pfam" id="PF00298">
    <property type="entry name" value="Ribosomal_L11"/>
    <property type="match status" value="1"/>
</dbReference>
<dbReference type="Pfam" id="PF03946">
    <property type="entry name" value="Ribosomal_L11_N"/>
    <property type="match status" value="1"/>
</dbReference>
<dbReference type="SMART" id="SM00649">
    <property type="entry name" value="RL11"/>
    <property type="match status" value="1"/>
</dbReference>
<dbReference type="SUPFAM" id="SSF54747">
    <property type="entry name" value="Ribosomal L11/L12e N-terminal domain"/>
    <property type="match status" value="1"/>
</dbReference>
<dbReference type="SUPFAM" id="SSF46906">
    <property type="entry name" value="Ribosomal protein L11, C-terminal domain"/>
    <property type="match status" value="1"/>
</dbReference>
<dbReference type="PROSITE" id="PS00359">
    <property type="entry name" value="RIBOSOMAL_L11"/>
    <property type="match status" value="1"/>
</dbReference>
<name>RL11_BACMK</name>
<accession>A9VNB0</accession>
<organism>
    <name type="scientific">Bacillus mycoides (strain KBAB4)</name>
    <name type="common">Bacillus weihenstephanensis</name>
    <dbReference type="NCBI Taxonomy" id="315730"/>
    <lineage>
        <taxon>Bacteria</taxon>
        <taxon>Bacillati</taxon>
        <taxon>Bacillota</taxon>
        <taxon>Bacilli</taxon>
        <taxon>Bacillales</taxon>
        <taxon>Bacillaceae</taxon>
        <taxon>Bacillus</taxon>
        <taxon>Bacillus cereus group</taxon>
    </lineage>
</organism>
<protein>
    <recommendedName>
        <fullName evidence="1">Large ribosomal subunit protein uL11</fullName>
    </recommendedName>
    <alternativeName>
        <fullName evidence="2">50S ribosomal protein L11</fullName>
    </alternativeName>
</protein>
<reference key="1">
    <citation type="journal article" date="2008" name="Chem. Biol. Interact.">
        <title>Extending the Bacillus cereus group genomics to putative food-borne pathogens of different toxicity.</title>
        <authorList>
            <person name="Lapidus A."/>
            <person name="Goltsman E."/>
            <person name="Auger S."/>
            <person name="Galleron N."/>
            <person name="Segurens B."/>
            <person name="Dossat C."/>
            <person name="Land M.L."/>
            <person name="Broussolle V."/>
            <person name="Brillard J."/>
            <person name="Guinebretiere M.-H."/>
            <person name="Sanchis V."/>
            <person name="Nguen-the C."/>
            <person name="Lereclus D."/>
            <person name="Richardson P."/>
            <person name="Wincker P."/>
            <person name="Weissenbach J."/>
            <person name="Ehrlich S.D."/>
            <person name="Sorokin A."/>
        </authorList>
    </citation>
    <scope>NUCLEOTIDE SEQUENCE [LARGE SCALE GENOMIC DNA]</scope>
    <source>
        <strain>KBAB4</strain>
    </source>
</reference>
<feature type="chain" id="PRO_1000132865" description="Large ribosomal subunit protein uL11">
    <location>
        <begin position="1"/>
        <end position="141"/>
    </location>
</feature>
<sequence length="141" mass="14976">MAKKVIKMVKLQIPAGKANPAPPVGPALGQAGVNIMGFCKEFNARTADQAGLIIPVEITVFEDRSFTFITKTPPAAVLLKKVAGIESGSGEPNRNKVATVKRDKVREIAETKMPDLNAASVEAAMRMVEGTARSMGIVIED</sequence>
<keyword id="KW-0488">Methylation</keyword>
<keyword id="KW-0687">Ribonucleoprotein</keyword>
<keyword id="KW-0689">Ribosomal protein</keyword>
<keyword id="KW-0694">RNA-binding</keyword>
<keyword id="KW-0699">rRNA-binding</keyword>
<evidence type="ECO:0000255" key="1">
    <source>
        <dbReference type="HAMAP-Rule" id="MF_00736"/>
    </source>
</evidence>
<evidence type="ECO:0000305" key="2"/>
<gene>
    <name evidence="1" type="primary">rplK</name>
    <name type="ordered locus">BcerKBAB4_0092</name>
</gene>
<comment type="function">
    <text evidence="1">Forms part of the ribosomal stalk which helps the ribosome interact with GTP-bound translation factors.</text>
</comment>
<comment type="subunit">
    <text evidence="1">Part of the ribosomal stalk of the 50S ribosomal subunit. Interacts with L10 and the large rRNA to form the base of the stalk. L10 forms an elongated spine to which L12 dimers bind in a sequential fashion forming a multimeric L10(L12)X complex.</text>
</comment>
<comment type="PTM">
    <text evidence="1">One or more lysine residues are methylated.</text>
</comment>
<comment type="similarity">
    <text evidence="1">Belongs to the universal ribosomal protein uL11 family.</text>
</comment>